<proteinExistence type="evidence at protein level"/>
<keyword id="KW-0025">Alternative splicing</keyword>
<keyword id="KW-0472">Membrane</keyword>
<keyword id="KW-1267">Proteomics identification</keyword>
<keyword id="KW-1185">Reference proteome</keyword>
<keyword id="KW-0812">Transmembrane</keyword>
<keyword id="KW-1133">Transmembrane helix</keyword>
<feature type="chain" id="PRO_0000320944" description="Protein GREB1">
    <location>
        <begin position="1"/>
        <end position="1949"/>
    </location>
</feature>
<feature type="transmembrane region" description="Helical" evidence="1">
    <location>
        <begin position="1868"/>
        <end position="1888"/>
    </location>
</feature>
<feature type="region of interest" description="Disordered" evidence="2">
    <location>
        <begin position="52"/>
        <end position="77"/>
    </location>
</feature>
<feature type="region of interest" description="Disordered" evidence="2">
    <location>
        <begin position="302"/>
        <end position="334"/>
    </location>
</feature>
<feature type="region of interest" description="Disordered" evidence="2">
    <location>
        <begin position="1085"/>
        <end position="1210"/>
    </location>
</feature>
<feature type="compositionally biased region" description="Acidic residues" evidence="2">
    <location>
        <begin position="59"/>
        <end position="68"/>
    </location>
</feature>
<feature type="compositionally biased region" description="Basic and acidic residues" evidence="2">
    <location>
        <begin position="1085"/>
        <end position="1095"/>
    </location>
</feature>
<feature type="compositionally biased region" description="Basic and acidic residues" evidence="2">
    <location>
        <begin position="1110"/>
        <end position="1126"/>
    </location>
</feature>
<feature type="compositionally biased region" description="Low complexity" evidence="2">
    <location>
        <begin position="1127"/>
        <end position="1147"/>
    </location>
</feature>
<feature type="compositionally biased region" description="Basic and acidic residues" evidence="2">
    <location>
        <begin position="1166"/>
        <end position="1178"/>
    </location>
</feature>
<feature type="splice variant" id="VSP_031757" description="In isoform 4." evidence="11 12">
    <location>
        <begin position="1"/>
        <end position="1002"/>
    </location>
</feature>
<feature type="splice variant" id="VSP_031758" description="In isoform 3." evidence="10">
    <original>GHGNFPYLCGNLNDVVVSPLLYT</original>
    <variation>VFVNGATQMVALGPAEPASPRSL</variation>
    <location>
        <begin position="387"/>
        <end position="409"/>
    </location>
</feature>
<feature type="splice variant" id="VSP_031759" description="In isoform 3." evidence="10">
    <location>
        <begin position="410"/>
        <end position="1949"/>
    </location>
</feature>
<feature type="splice variant" id="VSP_031760" description="In isoform 2." evidence="10">
    <original>ADQVPLME</original>
    <variation>HQIRNPDV</variation>
    <location>
        <begin position="450"/>
        <end position="457"/>
    </location>
</feature>
<feature type="splice variant" id="VSP_031761" description="In isoform 2." evidence="10">
    <location>
        <begin position="458"/>
        <end position="1949"/>
    </location>
</feature>
<feature type="sequence variant" id="VAR_039313" description="In dbSNP:rs10929757." evidence="4 9">
    <original>N</original>
    <variation>T</variation>
    <location>
        <position position="77"/>
    </location>
</feature>
<feature type="sequence variant" id="VAR_039314" description="In dbSNP:rs4669751.">
    <original>V</original>
    <variation>A</variation>
    <location>
        <position position="122"/>
    </location>
</feature>
<feature type="sequence variant" id="VAR_039315" description="In dbSNP:rs6744817.">
    <original>V</original>
    <variation>M</variation>
    <location>
        <position position="346"/>
    </location>
</feature>
<feature type="sequence variant" id="VAR_061654" description="In dbSNP:rs35188552.">
    <original>F</original>
    <variation>L</variation>
    <location>
        <position position="359"/>
    </location>
</feature>
<feature type="sequence variant" id="VAR_061655" description="In dbSNP:rs36030386.">
    <original>A</original>
    <variation>T</variation>
    <location>
        <position position="632"/>
    </location>
</feature>
<feature type="sequence variant" id="VAR_039316" description="In dbSNP:rs3762579.">
    <original>R</original>
    <variation>Q</variation>
    <location>
        <position position="973"/>
    </location>
</feature>
<feature type="sequence variant" id="VAR_039317" description="In dbSNP:rs11695925.">
    <original>Y</original>
    <variation>C</variation>
    <location>
        <position position="1463"/>
    </location>
</feature>
<feature type="sequence variant" id="VAR_039318" description="In dbSNP:rs2304402." evidence="4 9">
    <original>D</original>
    <variation>N</variation>
    <location>
        <position position="1687"/>
    </location>
</feature>
<feature type="sequence variant" id="VAR_039319" description="In dbSNP:rs34955282.">
    <original>L</original>
    <variation>V</variation>
    <location>
        <position position="1814"/>
    </location>
</feature>
<feature type="sequence conflict" description="In Ref. 1; AAG39036." evidence="13" ref="1">
    <original>I</original>
    <variation>S</variation>
    <location>
        <position position="829"/>
    </location>
</feature>
<protein>
    <recommendedName>
        <fullName>Protein GREB1</fullName>
    </recommendedName>
    <alternativeName>
        <fullName>Gene regulated in breast cancer 1 protein</fullName>
    </alternativeName>
</protein>
<evidence type="ECO:0000255" key="1"/>
<evidence type="ECO:0000256" key="2">
    <source>
        <dbReference type="SAM" id="MobiDB-lite"/>
    </source>
</evidence>
<evidence type="ECO:0000269" key="3">
    <source>
    </source>
</evidence>
<evidence type="ECO:0000269" key="4">
    <source>
    </source>
</evidence>
<evidence type="ECO:0000269" key="5">
    <source>
    </source>
</evidence>
<evidence type="ECO:0000269" key="6">
    <source>
    </source>
</evidence>
<evidence type="ECO:0000269" key="7">
    <source>
    </source>
</evidence>
<evidence type="ECO:0000269" key="8">
    <source>
    </source>
</evidence>
<evidence type="ECO:0000269" key="9">
    <source ref="5"/>
</evidence>
<evidence type="ECO:0000303" key="10">
    <source>
    </source>
</evidence>
<evidence type="ECO:0000303" key="11">
    <source>
    </source>
</evidence>
<evidence type="ECO:0000303" key="12">
    <source>
    </source>
</evidence>
<evidence type="ECO:0000305" key="13"/>
<comment type="function">
    <text>May play a role in estrogen-stimulated cell proliferation. Acts as a regulator of hormone-dependent cancer growth in breast and prostate cancers.</text>
</comment>
<comment type="subcellular location">
    <subcellularLocation>
        <location evidence="1">Membrane</location>
        <topology evidence="1">Single-pass membrane protein</topology>
    </subcellularLocation>
</comment>
<comment type="alternative products">
    <event type="alternative splicing"/>
    <isoform>
        <id>Q4ZG55-1</id>
        <name>1</name>
        <name>GREB1a</name>
        <sequence type="displayed"/>
    </isoform>
    <isoform>
        <id>Q4ZG55-2</id>
        <name>2</name>
        <name>GREB1b</name>
        <sequence type="described" ref="VSP_031760 VSP_031761"/>
    </isoform>
    <isoform>
        <id>Q4ZG55-3</id>
        <name>3</name>
        <name>GREB1c</name>
        <sequence type="described" ref="VSP_031758 VSP_031759"/>
    </isoform>
    <isoform>
        <id>Q4ZG55-4</id>
        <name>4</name>
        <sequence type="described" ref="VSP_031757"/>
    </isoform>
</comment>
<comment type="tissue specificity">
    <text evidence="6">Expressed in proliferating prostatic tissue and prostate cancer.</text>
</comment>
<comment type="induction">
    <text evidence="3 5 6 7 8">Estrogen-responsive; regulated by estrogen receptors. Regulated by androgens. The regulatory region of the gene contains 3 estrogen-responsive elements.</text>
</comment>
<comment type="similarity">
    <text evidence="13">Belongs to the GREB1 family.</text>
</comment>
<comment type="sequence caution" evidence="13">
    <conflict type="erroneous initiation">
        <sequence resource="EMBL-CDS" id="BAA25501"/>
    </conflict>
</comment>
<comment type="online information" name="Atlas of Genetics and Cytogenetics in Oncology and Haematology">
    <link uri="https://atlasgeneticsoncology.org/gene/40751/GREB1"/>
</comment>
<organism>
    <name type="scientific">Homo sapiens</name>
    <name type="common">Human</name>
    <dbReference type="NCBI Taxonomy" id="9606"/>
    <lineage>
        <taxon>Eukaryota</taxon>
        <taxon>Metazoa</taxon>
        <taxon>Chordata</taxon>
        <taxon>Craniata</taxon>
        <taxon>Vertebrata</taxon>
        <taxon>Euteleostomi</taxon>
        <taxon>Mammalia</taxon>
        <taxon>Eutheria</taxon>
        <taxon>Euarchontoglires</taxon>
        <taxon>Primates</taxon>
        <taxon>Haplorrhini</taxon>
        <taxon>Catarrhini</taxon>
        <taxon>Hominidae</taxon>
        <taxon>Homo</taxon>
    </lineage>
</organism>
<gene>
    <name type="primary">GREB1</name>
    <name type="synonym">KIAA0575</name>
</gene>
<dbReference type="EMBL" id="AF245388">
    <property type="protein sequence ID" value="AAG39036.1"/>
    <property type="molecule type" value="mRNA"/>
</dbReference>
<dbReference type="EMBL" id="AF245389">
    <property type="protein sequence ID" value="AAG39037.1"/>
    <property type="molecule type" value="mRNA"/>
</dbReference>
<dbReference type="EMBL" id="AF245390">
    <property type="protein sequence ID" value="AAG39038.1"/>
    <property type="molecule type" value="mRNA"/>
</dbReference>
<dbReference type="EMBL" id="AB011147">
    <property type="protein sequence ID" value="BAA25501.2"/>
    <property type="status" value="ALT_INIT"/>
    <property type="molecule type" value="mRNA"/>
</dbReference>
<dbReference type="EMBL" id="AC011994">
    <property type="protein sequence ID" value="AAX88907.1"/>
    <property type="molecule type" value="Genomic_DNA"/>
</dbReference>
<dbReference type="EMBL" id="AC110754">
    <property type="status" value="NOT_ANNOTATED_CDS"/>
    <property type="molecule type" value="Genomic_DNA"/>
</dbReference>
<dbReference type="EMBL" id="CH471053">
    <property type="protein sequence ID" value="EAX00927.1"/>
    <property type="molecule type" value="Genomic_DNA"/>
</dbReference>
<dbReference type="EMBL" id="CH471053">
    <property type="protein sequence ID" value="EAX00928.1"/>
    <property type="molecule type" value="Genomic_DNA"/>
</dbReference>
<dbReference type="EMBL" id="BC054502">
    <property type="protein sequence ID" value="AAH54502.1"/>
    <property type="molecule type" value="mRNA"/>
</dbReference>
<dbReference type="CCDS" id="CCDS33146.1">
    <molecule id="Q4ZG55-2"/>
</dbReference>
<dbReference type="CCDS" id="CCDS33147.1">
    <molecule id="Q4ZG55-3"/>
</dbReference>
<dbReference type="CCDS" id="CCDS42655.1">
    <molecule id="Q4ZG55-1"/>
</dbReference>
<dbReference type="PIR" id="T00340">
    <property type="entry name" value="T00340"/>
</dbReference>
<dbReference type="RefSeq" id="NP_055483.2">
    <molecule id="Q4ZG55-1"/>
    <property type="nucleotide sequence ID" value="NM_014668.3"/>
</dbReference>
<dbReference type="RefSeq" id="NP_149081.1">
    <molecule id="Q4ZG55-2"/>
    <property type="nucleotide sequence ID" value="NM_033090.3"/>
</dbReference>
<dbReference type="RefSeq" id="NP_683701.2">
    <molecule id="Q4ZG55-3"/>
    <property type="nucleotide sequence ID" value="NM_148903.3"/>
</dbReference>
<dbReference type="RefSeq" id="XP_005246249.1">
    <molecule id="Q4ZG55-1"/>
    <property type="nucleotide sequence ID" value="XM_005246192.5"/>
</dbReference>
<dbReference type="RefSeq" id="XP_011508725.1">
    <molecule id="Q4ZG55-2"/>
    <property type="nucleotide sequence ID" value="XM_011510423.4"/>
</dbReference>
<dbReference type="RefSeq" id="XP_024309018.1">
    <molecule id="Q4ZG55-1"/>
    <property type="nucleotide sequence ID" value="XM_024453250.2"/>
</dbReference>
<dbReference type="RefSeq" id="XP_024309019.1">
    <molecule id="Q4ZG55-1"/>
    <property type="nucleotide sequence ID" value="XM_024453251.2"/>
</dbReference>
<dbReference type="RefSeq" id="XP_024309021.1">
    <molecule id="Q4ZG55-1"/>
    <property type="nucleotide sequence ID" value="XM_024453253.2"/>
</dbReference>
<dbReference type="RefSeq" id="XP_024309024.1">
    <molecule id="Q4ZG55-1"/>
    <property type="nucleotide sequence ID" value="XM_024453256.2"/>
</dbReference>
<dbReference type="RefSeq" id="XP_047302416.1">
    <molecule id="Q4ZG55-1"/>
    <property type="nucleotide sequence ID" value="XM_047446460.1"/>
</dbReference>
<dbReference type="RefSeq" id="XP_047302427.1">
    <molecule id="Q4ZG55-2"/>
    <property type="nucleotide sequence ID" value="XM_047446471.1"/>
</dbReference>
<dbReference type="RefSeq" id="XP_047302428.1">
    <molecule id="Q4ZG55-2"/>
    <property type="nucleotide sequence ID" value="XM_047446472.1"/>
</dbReference>
<dbReference type="RefSeq" id="XP_047302429.1">
    <molecule id="Q4ZG55-2"/>
    <property type="nucleotide sequence ID" value="XM_047446473.1"/>
</dbReference>
<dbReference type="RefSeq" id="XP_047302430.1">
    <molecule id="Q4ZG55-2"/>
    <property type="nucleotide sequence ID" value="XM_047446474.1"/>
</dbReference>
<dbReference type="RefSeq" id="XP_047302431.1">
    <molecule id="Q4ZG55-2"/>
    <property type="nucleotide sequence ID" value="XM_047446475.1"/>
</dbReference>
<dbReference type="BioGRID" id="115040">
    <property type="interactions" value="28"/>
</dbReference>
<dbReference type="FunCoup" id="Q4ZG55">
    <property type="interactions" value="600"/>
</dbReference>
<dbReference type="IntAct" id="Q4ZG55">
    <property type="interactions" value="22"/>
</dbReference>
<dbReference type="MINT" id="Q4ZG55"/>
<dbReference type="STRING" id="9606.ENSP00000370896"/>
<dbReference type="GlyGen" id="Q4ZG55">
    <property type="glycosylation" value="4 sites, 1 O-linked glycan (3 sites)"/>
</dbReference>
<dbReference type="iPTMnet" id="Q4ZG55"/>
<dbReference type="PhosphoSitePlus" id="Q4ZG55"/>
<dbReference type="BioMuta" id="GREB1"/>
<dbReference type="DMDM" id="74739248"/>
<dbReference type="jPOST" id="Q4ZG55"/>
<dbReference type="MassIVE" id="Q4ZG55"/>
<dbReference type="PaxDb" id="9606-ENSP00000370896"/>
<dbReference type="PeptideAtlas" id="Q4ZG55"/>
<dbReference type="ProteomicsDB" id="62378">
    <molecule id="Q4ZG55-1"/>
</dbReference>
<dbReference type="ProteomicsDB" id="62379">
    <molecule id="Q4ZG55-2"/>
</dbReference>
<dbReference type="ProteomicsDB" id="62380">
    <molecule id="Q4ZG55-3"/>
</dbReference>
<dbReference type="ProteomicsDB" id="62381">
    <molecule id="Q4ZG55-4"/>
</dbReference>
<dbReference type="Antibodypedia" id="26843">
    <property type="antibodies" value="162 antibodies from 23 providers"/>
</dbReference>
<dbReference type="DNASU" id="9687"/>
<dbReference type="Ensembl" id="ENST00000234142.9">
    <molecule id="Q4ZG55-1"/>
    <property type="protein sequence ID" value="ENSP00000234142.5"/>
    <property type="gene ID" value="ENSG00000196208.14"/>
</dbReference>
<dbReference type="Ensembl" id="ENST00000263834.9">
    <molecule id="Q4ZG55-3"/>
    <property type="protein sequence ID" value="ENSP00000263834.5"/>
    <property type="gene ID" value="ENSG00000196208.14"/>
</dbReference>
<dbReference type="Ensembl" id="ENST00000381483.6">
    <molecule id="Q4ZG55-2"/>
    <property type="protein sequence ID" value="ENSP00000370892.2"/>
    <property type="gene ID" value="ENSG00000196208.14"/>
</dbReference>
<dbReference type="Ensembl" id="ENST00000381486.7">
    <molecule id="Q4ZG55-1"/>
    <property type="protein sequence ID" value="ENSP00000370896.2"/>
    <property type="gene ID" value="ENSG00000196208.14"/>
</dbReference>
<dbReference type="Ensembl" id="ENST00000396123.2">
    <molecule id="Q4ZG55-4"/>
    <property type="protein sequence ID" value="ENSP00000379429.1"/>
    <property type="gene ID" value="ENSG00000196208.14"/>
</dbReference>
<dbReference type="GeneID" id="9687"/>
<dbReference type="KEGG" id="hsa:9687"/>
<dbReference type="MANE-Select" id="ENST00000381486.7">
    <property type="protein sequence ID" value="ENSP00000370896.2"/>
    <property type="RefSeq nucleotide sequence ID" value="NM_014668.4"/>
    <property type="RefSeq protein sequence ID" value="NP_055483.2"/>
</dbReference>
<dbReference type="UCSC" id="uc002rbk.2">
    <molecule id="Q4ZG55-1"/>
    <property type="organism name" value="human"/>
</dbReference>
<dbReference type="AGR" id="HGNC:24885"/>
<dbReference type="CTD" id="9687"/>
<dbReference type="DisGeNET" id="9687"/>
<dbReference type="GeneCards" id="GREB1"/>
<dbReference type="HGNC" id="HGNC:24885">
    <property type="gene designation" value="GREB1"/>
</dbReference>
<dbReference type="HPA" id="ENSG00000196208">
    <property type="expression patterns" value="Tissue enriched (ovary)"/>
</dbReference>
<dbReference type="MIM" id="611736">
    <property type="type" value="gene"/>
</dbReference>
<dbReference type="neXtProt" id="NX_Q4ZG55"/>
<dbReference type="OpenTargets" id="ENSG00000196208"/>
<dbReference type="PharmGKB" id="PA164747489"/>
<dbReference type="VEuPathDB" id="HostDB:ENSG00000196208"/>
<dbReference type="eggNOG" id="ENOG502QQXD">
    <property type="taxonomic scope" value="Eukaryota"/>
</dbReference>
<dbReference type="GeneTree" id="ENSGT00390000008041"/>
<dbReference type="HOGENOM" id="CLU_237163_0_0_1"/>
<dbReference type="InParanoid" id="Q4ZG55"/>
<dbReference type="OMA" id="SEYSVEW"/>
<dbReference type="OrthoDB" id="9989163at2759"/>
<dbReference type="PAN-GO" id="Q4ZG55">
    <property type="GO annotations" value="1 GO annotation based on evolutionary models"/>
</dbReference>
<dbReference type="PhylomeDB" id="Q4ZG55"/>
<dbReference type="TreeFam" id="TF329531"/>
<dbReference type="PathwayCommons" id="Q4ZG55"/>
<dbReference type="Reactome" id="R-HSA-9018519">
    <property type="pathway name" value="Estrogen-dependent gene expression"/>
</dbReference>
<dbReference type="SignaLink" id="Q4ZG55"/>
<dbReference type="SIGNOR" id="Q4ZG55"/>
<dbReference type="BioGRID-ORCS" id="9687">
    <property type="hits" value="10 hits in 1153 CRISPR screens"/>
</dbReference>
<dbReference type="ChiTaRS" id="GREB1">
    <property type="organism name" value="human"/>
</dbReference>
<dbReference type="GenomeRNAi" id="9687"/>
<dbReference type="Pharos" id="Q4ZG55">
    <property type="development level" value="Tbio"/>
</dbReference>
<dbReference type="PRO" id="PR:Q4ZG55"/>
<dbReference type="Proteomes" id="UP000005640">
    <property type="component" value="Chromosome 2"/>
</dbReference>
<dbReference type="RNAct" id="Q4ZG55">
    <property type="molecule type" value="protein"/>
</dbReference>
<dbReference type="Bgee" id="ENSG00000196208">
    <property type="expression patterns" value="Expressed in left ovary and 161 other cell types or tissues"/>
</dbReference>
<dbReference type="ExpressionAtlas" id="Q4ZG55">
    <property type="expression patterns" value="baseline and differential"/>
</dbReference>
<dbReference type="GO" id="GO:0070062">
    <property type="term" value="C:extracellular exosome"/>
    <property type="evidence" value="ECO:0007005"/>
    <property type="project" value="UniProtKB"/>
</dbReference>
<dbReference type="GO" id="GO:0016020">
    <property type="term" value="C:membrane"/>
    <property type="evidence" value="ECO:0007669"/>
    <property type="project" value="UniProtKB-SubCell"/>
</dbReference>
<dbReference type="GO" id="GO:0005654">
    <property type="term" value="C:nucleoplasm"/>
    <property type="evidence" value="ECO:0000304"/>
    <property type="project" value="Reactome"/>
</dbReference>
<dbReference type="GO" id="GO:0002009">
    <property type="term" value="P:morphogenesis of an epithelium"/>
    <property type="evidence" value="ECO:0000318"/>
    <property type="project" value="GO_Central"/>
</dbReference>
<dbReference type="InterPro" id="IPR028422">
    <property type="entry name" value="GREB1"/>
</dbReference>
<dbReference type="InterPro" id="IPR048659">
    <property type="entry name" value="GREB1-like_2nd"/>
</dbReference>
<dbReference type="InterPro" id="IPR046927">
    <property type="entry name" value="GREB1-like_C"/>
</dbReference>
<dbReference type="InterPro" id="IPR048657">
    <property type="entry name" value="GREB1-like_cpSF2"/>
</dbReference>
<dbReference type="InterPro" id="IPR046926">
    <property type="entry name" value="GREB1_N"/>
</dbReference>
<dbReference type="InterPro" id="IPR049100">
    <property type="entry name" value="TAGT"/>
</dbReference>
<dbReference type="PANTHER" id="PTHR15720">
    <property type="entry name" value="GREB1-RELATED"/>
    <property type="match status" value="1"/>
</dbReference>
<dbReference type="PANTHER" id="PTHR15720:SF13">
    <property type="entry name" value="PROTEIN GREB1"/>
    <property type="match status" value="1"/>
</dbReference>
<dbReference type="Pfam" id="PF20692">
    <property type="entry name" value="cpSF2-GREB1"/>
    <property type="match status" value="1"/>
</dbReference>
<dbReference type="Pfam" id="PF20688">
    <property type="entry name" value="GREB1_2nd"/>
    <property type="match status" value="1"/>
</dbReference>
<dbReference type="Pfam" id="PF20267">
    <property type="entry name" value="GREB1_C"/>
    <property type="match status" value="1"/>
</dbReference>
<dbReference type="Pfam" id="PF15782">
    <property type="entry name" value="GREB1_N"/>
    <property type="match status" value="1"/>
</dbReference>
<dbReference type="Pfam" id="PF20691">
    <property type="entry name" value="TAGT"/>
    <property type="match status" value="1"/>
</dbReference>
<reference key="1">
    <citation type="journal article" date="2000" name="Cancer Res.">
        <title>PDZK1 and GREB1 are estrogen-regulated genes expressed in hormone-responsive breast cancer.</title>
        <authorList>
            <person name="Ghosh M.G."/>
            <person name="Thompson D.A."/>
            <person name="Weigel R.J."/>
        </authorList>
    </citation>
    <scope>NUCLEOTIDE SEQUENCE [MRNA] (ISOFORMS 2 AND 3)</scope>
    <scope>NUCLEOTIDE SEQUENCE [MRNA] OF 1-1001 (ISOFORM 1)</scope>
    <source>
        <tissue>Mammary carcinoma</tissue>
    </source>
</reference>
<reference key="2">
    <citation type="journal article" date="1998" name="DNA Res.">
        <title>Prediction of the coding sequences of unidentified human genes. IX. The complete sequences of 100 new cDNA clones from brain which can code for large proteins in vitro.</title>
        <authorList>
            <person name="Nagase T."/>
            <person name="Ishikawa K."/>
            <person name="Miyajima N."/>
            <person name="Tanaka A."/>
            <person name="Kotani H."/>
            <person name="Nomura N."/>
            <person name="Ohara O."/>
        </authorList>
    </citation>
    <scope>NUCLEOTIDE SEQUENCE [LARGE SCALE MRNA] (ISOFORM 4)</scope>
    <source>
        <tissue>Brain</tissue>
    </source>
</reference>
<reference key="3">
    <citation type="submission" date="2004-01" db="EMBL/GenBank/DDBJ databases">
        <authorList>
            <person name="Ohara O."/>
            <person name="Nagase T."/>
            <person name="Ishikawa K."/>
        </authorList>
    </citation>
    <scope>SEQUENCE REVISION</scope>
</reference>
<reference key="4">
    <citation type="journal article" date="2005" name="Nature">
        <title>Generation and annotation of the DNA sequences of human chromosomes 2 and 4.</title>
        <authorList>
            <person name="Hillier L.W."/>
            <person name="Graves T.A."/>
            <person name="Fulton R.S."/>
            <person name="Fulton L.A."/>
            <person name="Pepin K.H."/>
            <person name="Minx P."/>
            <person name="Wagner-McPherson C."/>
            <person name="Layman D."/>
            <person name="Wylie K."/>
            <person name="Sekhon M."/>
            <person name="Becker M.C."/>
            <person name="Fewell G.A."/>
            <person name="Delehaunty K.D."/>
            <person name="Miner T.L."/>
            <person name="Nash W.E."/>
            <person name="Kremitzki C."/>
            <person name="Oddy L."/>
            <person name="Du H."/>
            <person name="Sun H."/>
            <person name="Bradshaw-Cordum H."/>
            <person name="Ali J."/>
            <person name="Carter J."/>
            <person name="Cordes M."/>
            <person name="Harris A."/>
            <person name="Isak A."/>
            <person name="van Brunt A."/>
            <person name="Nguyen C."/>
            <person name="Du F."/>
            <person name="Courtney L."/>
            <person name="Kalicki J."/>
            <person name="Ozersky P."/>
            <person name="Abbott S."/>
            <person name="Armstrong J."/>
            <person name="Belter E.A."/>
            <person name="Caruso L."/>
            <person name="Cedroni M."/>
            <person name="Cotton M."/>
            <person name="Davidson T."/>
            <person name="Desai A."/>
            <person name="Elliott G."/>
            <person name="Erb T."/>
            <person name="Fronick C."/>
            <person name="Gaige T."/>
            <person name="Haakenson W."/>
            <person name="Haglund K."/>
            <person name="Holmes A."/>
            <person name="Harkins R."/>
            <person name="Kim K."/>
            <person name="Kruchowski S.S."/>
            <person name="Strong C.M."/>
            <person name="Grewal N."/>
            <person name="Goyea E."/>
            <person name="Hou S."/>
            <person name="Levy A."/>
            <person name="Martinka S."/>
            <person name="Mead K."/>
            <person name="McLellan M.D."/>
            <person name="Meyer R."/>
            <person name="Randall-Maher J."/>
            <person name="Tomlinson C."/>
            <person name="Dauphin-Kohlberg S."/>
            <person name="Kozlowicz-Reilly A."/>
            <person name="Shah N."/>
            <person name="Swearengen-Shahid S."/>
            <person name="Snider J."/>
            <person name="Strong J.T."/>
            <person name="Thompson J."/>
            <person name="Yoakum M."/>
            <person name="Leonard S."/>
            <person name="Pearman C."/>
            <person name="Trani L."/>
            <person name="Radionenko M."/>
            <person name="Waligorski J.E."/>
            <person name="Wang C."/>
            <person name="Rock S.M."/>
            <person name="Tin-Wollam A.-M."/>
            <person name="Maupin R."/>
            <person name="Latreille P."/>
            <person name="Wendl M.C."/>
            <person name="Yang S.-P."/>
            <person name="Pohl C."/>
            <person name="Wallis J.W."/>
            <person name="Spieth J."/>
            <person name="Bieri T.A."/>
            <person name="Berkowicz N."/>
            <person name="Nelson J.O."/>
            <person name="Osborne J."/>
            <person name="Ding L."/>
            <person name="Meyer R."/>
            <person name="Sabo A."/>
            <person name="Shotland Y."/>
            <person name="Sinha P."/>
            <person name="Wohldmann P.E."/>
            <person name="Cook L.L."/>
            <person name="Hickenbotham M.T."/>
            <person name="Eldred J."/>
            <person name="Williams D."/>
            <person name="Jones T.A."/>
            <person name="She X."/>
            <person name="Ciccarelli F.D."/>
            <person name="Izaurralde E."/>
            <person name="Taylor J."/>
            <person name="Schmutz J."/>
            <person name="Myers R.M."/>
            <person name="Cox D.R."/>
            <person name="Huang X."/>
            <person name="McPherson J.D."/>
            <person name="Mardis E.R."/>
            <person name="Clifton S.W."/>
            <person name="Warren W.C."/>
            <person name="Chinwalla A.T."/>
            <person name="Eddy S.R."/>
            <person name="Marra M.A."/>
            <person name="Ovcharenko I."/>
            <person name="Furey T.S."/>
            <person name="Miller W."/>
            <person name="Eichler E.E."/>
            <person name="Bork P."/>
            <person name="Suyama M."/>
            <person name="Torrents D."/>
            <person name="Waterston R.H."/>
            <person name="Wilson R.K."/>
        </authorList>
    </citation>
    <scope>NUCLEOTIDE SEQUENCE [LARGE SCALE GENOMIC DNA]</scope>
</reference>
<reference key="5">
    <citation type="submission" date="2005-09" db="EMBL/GenBank/DDBJ databases">
        <authorList>
            <person name="Mural R.J."/>
            <person name="Istrail S."/>
            <person name="Sutton G.G."/>
            <person name="Florea L."/>
            <person name="Halpern A.L."/>
            <person name="Mobarry C.M."/>
            <person name="Lippert R."/>
            <person name="Walenz B."/>
            <person name="Shatkay H."/>
            <person name="Dew I."/>
            <person name="Miller J.R."/>
            <person name="Flanigan M.J."/>
            <person name="Edwards N.J."/>
            <person name="Bolanos R."/>
            <person name="Fasulo D."/>
            <person name="Halldorsson B.V."/>
            <person name="Hannenhalli S."/>
            <person name="Turner R."/>
            <person name="Yooseph S."/>
            <person name="Lu F."/>
            <person name="Nusskern D.R."/>
            <person name="Shue B.C."/>
            <person name="Zheng X.H."/>
            <person name="Zhong F."/>
            <person name="Delcher A.L."/>
            <person name="Huson D.H."/>
            <person name="Kravitz S.A."/>
            <person name="Mouchard L."/>
            <person name="Reinert K."/>
            <person name="Remington K.A."/>
            <person name="Clark A.G."/>
            <person name="Waterman M.S."/>
            <person name="Eichler E.E."/>
            <person name="Adams M.D."/>
            <person name="Hunkapiller M.W."/>
            <person name="Myers E.W."/>
            <person name="Venter J.C."/>
        </authorList>
    </citation>
    <scope>NUCLEOTIDE SEQUENCE [LARGE SCALE GENOMIC DNA]</scope>
    <scope>VARIANTS THR-77 AND ASN-1687</scope>
</reference>
<reference key="6">
    <citation type="journal article" date="2004" name="Genome Res.">
        <title>The status, quality, and expansion of the NIH full-length cDNA project: the Mammalian Gene Collection (MGC).</title>
        <authorList>
            <consortium name="The MGC Project Team"/>
        </authorList>
    </citation>
    <scope>NUCLEOTIDE SEQUENCE [LARGE SCALE MRNA] (ISOFORM 4)</scope>
    <scope>VARIANTS THR-77 AND ASN-1687</scope>
    <source>
        <tissue>Skin</tissue>
    </source>
</reference>
<reference key="7">
    <citation type="journal article" date="2004" name="Genome Biol.">
        <title>Discovery of estrogen receptor alpha target genes and response elements in breast tumor cells.</title>
        <authorList>
            <person name="Lin C.-Y."/>
            <person name="Stroem A."/>
            <person name="Vega V.B."/>
            <person name="Kong S.L."/>
            <person name="Yeo A.L."/>
            <person name="Thomsen J.S."/>
            <person name="Chan W.C."/>
            <person name="Doray B."/>
            <person name="Bangarusamy D.K."/>
            <person name="Ramasamy A."/>
            <person name="Vergara L.A."/>
            <person name="Tang S."/>
            <person name="Chong A."/>
            <person name="Bajic V.B."/>
            <person name="Miller L.D."/>
            <person name="Gustafsson J.-A."/>
            <person name="Liu E.T."/>
        </authorList>
    </citation>
    <scope>INDUCTION BY ESTROGEN</scope>
</reference>
<reference key="8">
    <citation type="journal article" date="2005" name="Breast Cancer Res. Treat.">
        <title>GREB 1 is a critical regulator of hormone dependent breast cancer growth.</title>
        <authorList>
            <person name="Rae J.M."/>
            <person name="Johnson M.D."/>
            <person name="Scheys J.O."/>
            <person name="Cordero K.E."/>
            <person name="Larios J.M."/>
            <person name="Lippman M.E."/>
        </authorList>
    </citation>
    <scope>POSSIBLE FUNCTION</scope>
    <scope>INDUCTION BY ESTROGEN</scope>
</reference>
<reference key="9">
    <citation type="journal article" date="2006" name="Prostate">
        <title>GREB1 is a novel androgen-regulated gene required for prostate cancer growth.</title>
        <authorList>
            <person name="Rae J.M."/>
            <person name="Johnson M.D."/>
            <person name="Cordero K.E."/>
            <person name="Scheys J.O."/>
            <person name="Larios J.M."/>
            <person name="Gottardis M.M."/>
            <person name="Pienta K.J."/>
            <person name="Lippman M.E."/>
        </authorList>
    </citation>
    <scope>TISSUE SPECIFICITY</scope>
    <scope>INDUCTION</scope>
</reference>
<reference key="10">
    <citation type="journal article" date="2007" name="J. Biol. Chem.">
        <title>Regulation of GREB1 transcription by estrogen receptor alpha through a multipartite enhancer spread over 20 kb of upstream flanking sequences.</title>
        <authorList>
            <person name="Deschenes J."/>
            <person name="Bourdeau V."/>
            <person name="White J.H."/>
            <person name="Mader S."/>
        </authorList>
    </citation>
    <scope>INDUCTION BY ESTROGEN</scope>
</reference>
<reference key="11">
    <citation type="journal article" date="2007" name="Mol. Endocrinol.">
        <title>Long-range activation of GREB1 by estrogen receptor via three distal consensus estrogen-responsive elements in breast cancer cells.</title>
        <authorList>
            <person name="Sun J."/>
            <person name="Nawaz Z."/>
            <person name="Slingerland J.M."/>
        </authorList>
    </citation>
    <scope>INDUCTION BY ESTROGEN</scope>
</reference>
<name>GREB1_HUMAN</name>
<accession>Q4ZG55</accession>
<accession>A6NHD0</accession>
<accession>A6NKN0</accession>
<accession>B5MDA9</accession>
<accession>O60321</accession>
<accession>Q7Z5S2</accession>
<accession>Q9H2Q6</accession>
<accession>Q9H2Q7</accession>
<accession>Q9H2Q8</accession>
<sequence>MGNSYAGQLKTTRFEEVLHNSIEASLRSNNLVPRPIFSQLYLEAEQQLAALEGGSRVDNEEEEEEGEGGLETNGPPNPFQLHPLPEGCCTTDGFCQAGKDLRLVSISNEPMDVPAGFLLVGVKSPSLPDHLLVCAVDKRFLPDDNGHNALLGFSGNCVGCGKKGFCYFTEFSNHINLKLTTQPKKQKHLKYYLVRNAQGTLTKGPLICWKGSEFRSRQIPASTCSSSLFPALESTAAFPSEPVPGTNPSILMGAQQAGPASDHPSLNAAMGPAVFNGKDSPKCQQLAKNNLLALPRPSALGILSNSGPPKKRHKGWSPESPSAPDGGCPQGGGNRAKYESAGMSCVPQVGLVGPASVTFPVVASGEPVSVPDNLLKICKAKPVIFKGHGNFPYLCGNLNDVVVSPLLYTCYQNSQSVSRAYEQYGASAIQPISEEMQLLLTVYYLVQLAADQVPLMEDLEQIFLRSWRESHLTEIRQYQQAPPQPFPPAPSAAAPVTSAQLPWLASLAASSCNDSVHVIECAYSLAEGLSEMFRLLVEGKLAKTNYVVIICACRSAAIDSCIAVTGKYQARILSESLLTPAEYQKEVNYELVTGKVDSLGAFFSTLCPEGDIDILLDKFHQENQGHISSSLAASSVTKAASLDVSGTPVCTSYNLEPHSIRPFQLAVAQKLLSHVCSIADSSTQNLDLGSFEKVDFLICIPPSEVTYQQTLLHVWHSGVLLELGLKKEHMTKQRVEQYVLKLDTEAQTKFKAFLQNSFQNPHTLFVLIHDHAHWDLVSSTVHNLYSQSDPSVGLVDRLLNCREVKEAPNIVTLHVTSFPYALQTQHTLISPYNEIHWPASCSNGVDLYHENKKYFGLSEFIESTLSGHSLPLLRYDSSFEAMVTALGKRFPRLHSAVIRTFVLVQHYAAALMAVSGLPQMKNYTSVETLEITQNLLNSPKQCPCGHGLMVLLRVPCSPLAVVAYERLAHVRARLALEEHFEIILGSPSSGVTVGKHFVKQLRMWQKIEDVEWRPQTYLELEGLPCILIFSGMDPHGESLPRSLRYCDLRLINSSCLVRTALEQELGLAAYFVSNEVPLEKGARNEALESDAEKLSSTDNEDEELGTEGSTSEKRSPMKRERSRSHDSASSSLSSKASGSALGGESSAQPTALPQGEHARSPQPRGPAEEGRAPGEKQRPRASQGPPSAISRHSPGPTPQPDCSLRTGQRSVQVSVTSSCSQLSSSSGSSSSSVAPAAGTWVLQASQCSLTKACRQPPIVFLPKLVYDMVVSTDSSGLPKAASLLPSPSVMWASSFRPLLSKTMTSTEQSLYYRQWTVPRPSHMDYGNRAEGRVDGFHPRRLLLSGPPQIGKTGAYLQFLSVLSRMLVRLTEVDVYDEEEININLREESDWHYLQLSDPWPDLELFKKLPFDYIIHDPKYEDASLICSHYQGIKSEDRGMSRKPEDLYVRRQTARMRLSKYAAYNTYHHCEQCHQYMGFHPRYQLYESTLHAFAFSYSMLGEEIQLHFIIPKSKEHHFVFSQPGGQLESMRLPLVTDKSHEYIKSPTFTPTTGRHEHGLFNLYHAMDGASHLHVLVVKEYEMAIYKKYWPNHIMLVLPSIFNSAGVGAAHFLIKELSYHNLELERNRQEELGIKPQDIWPFIVISDDSCVMWNVVDVNSAGERSREFSWSERNVSLKHIMQHIEAAPDIMHYALLGLRKWSSKTRASEVQEPFSRCHVHNFIILNVDLTQNVQYNQNRFLCDDVDFNLRVHSAGLLLCRFNRFSVMKKQIVVGGHRSFHITSKVSDNSAAVVPAQYICAPDSKHTFLAAPAQLLLEKFLQHHSHLFFPLSLKNHDHPVLSVDCYLNLGSQISVCYVSSRPHSLNISCSDLLFSGLLLYLCDSFVGASFLKKFHFLKGATLCVICQDRSSLRQTVVRLELEDEWQFRLRDEFQTANAREDRPLFFLTGRHI</sequence>